<comment type="subcellular location">
    <subcellularLocation>
        <location evidence="1">Secreted</location>
        <location evidence="1">Cell wall</location>
    </subcellularLocation>
</comment>
<protein>
    <recommendedName>
        <fullName>200 kDa cell wall protein</fullName>
    </recommendedName>
</protein>
<name>CWP31_TOBAC</name>
<sequence length="15" mass="1870">NYQYSPPPPPKKKYY</sequence>
<proteinExistence type="evidence at protein level"/>
<organism>
    <name type="scientific">Nicotiana tabacum</name>
    <name type="common">Common tobacco</name>
    <dbReference type="NCBI Taxonomy" id="4097"/>
    <lineage>
        <taxon>Eukaryota</taxon>
        <taxon>Viridiplantae</taxon>
        <taxon>Streptophyta</taxon>
        <taxon>Embryophyta</taxon>
        <taxon>Tracheophyta</taxon>
        <taxon>Spermatophyta</taxon>
        <taxon>Magnoliopsida</taxon>
        <taxon>eudicotyledons</taxon>
        <taxon>Gunneridae</taxon>
        <taxon>Pentapetalae</taxon>
        <taxon>asterids</taxon>
        <taxon>lamiids</taxon>
        <taxon>Solanales</taxon>
        <taxon>Solanaceae</taxon>
        <taxon>Nicotianoideae</taxon>
        <taxon>Nicotianeae</taxon>
        <taxon>Nicotiana</taxon>
    </lineage>
</organism>
<reference evidence="3" key="1">
    <citation type="journal article" date="2001" name="Planta">
        <title>Proteomic analysis reveals a novel set of cell wall proteins in a transformed tobacco cell culture that synthesises secondary walls as determined by biochemical and morphological parameters.</title>
        <authorList>
            <person name="Blee K.A."/>
            <person name="Wheatley E.R."/>
            <person name="Bonham V.A."/>
            <person name="Mitchell G.P."/>
            <person name="Robertson D."/>
            <person name="Slabas A.R."/>
            <person name="Burrell M.M."/>
            <person name="Wojtaszek P."/>
            <person name="Bolwell G.P."/>
        </authorList>
    </citation>
    <scope>PROTEIN SEQUENCE</scope>
    <scope>SUBCELLULAR LOCATION</scope>
    <scope>HYDROXYLATION AT PRO-6; PRO-7; PRO-8; PRO-9 AND PRO-10</scope>
    <source>
        <strain evidence="1">cv. Petit Havana</strain>
    </source>
</reference>
<feature type="chain" id="PRO_0000079720" description="200 kDa cell wall protein">
    <location>
        <begin position="1"/>
        <end position="15" status="greater than"/>
    </location>
</feature>
<feature type="modified residue" description="4-hydroxyproline" evidence="1">
    <location>
        <position position="6"/>
    </location>
</feature>
<feature type="modified residue" description="4-hydroxyproline" evidence="1">
    <location>
        <position position="7"/>
    </location>
</feature>
<feature type="modified residue" description="4-hydroxyproline" evidence="1">
    <location>
        <position position="8"/>
    </location>
</feature>
<feature type="modified residue" description="4-hydroxyproline" evidence="1">
    <location>
        <position position="9"/>
    </location>
</feature>
<feature type="modified residue" description="4-hydroxyproline" evidence="1">
    <location>
        <position position="10"/>
    </location>
</feature>
<feature type="non-terminal residue" evidence="2">
    <location>
        <position position="15"/>
    </location>
</feature>
<keyword id="KW-0134">Cell wall</keyword>
<keyword id="KW-0903">Direct protein sequencing</keyword>
<keyword id="KW-0379">Hydroxylation</keyword>
<keyword id="KW-1185">Reference proteome</keyword>
<keyword id="KW-0964">Secreted</keyword>
<accession>P82439</accession>
<evidence type="ECO:0000269" key="1">
    <source>
    </source>
</evidence>
<evidence type="ECO:0000303" key="2">
    <source>
    </source>
</evidence>
<evidence type="ECO:0000305" key="3"/>
<dbReference type="PaxDb" id="4097-P82439"/>
<dbReference type="Proteomes" id="UP000084051">
    <property type="component" value="Unplaced"/>
</dbReference>
<dbReference type="GO" id="GO:0005576">
    <property type="term" value="C:extracellular region"/>
    <property type="evidence" value="ECO:0007669"/>
    <property type="project" value="UniProtKB-KW"/>
</dbReference>